<name>Y2117_SHEWM</name>
<dbReference type="EMBL" id="CP000961">
    <property type="protein sequence ID" value="ACA86401.1"/>
    <property type="molecule type" value="Genomic_DNA"/>
</dbReference>
<dbReference type="RefSeq" id="WP_012324746.1">
    <property type="nucleotide sequence ID" value="NC_010506.1"/>
</dbReference>
<dbReference type="SMR" id="B1KDK4"/>
<dbReference type="STRING" id="392500.Swoo_2117"/>
<dbReference type="KEGG" id="swd:Swoo_2117"/>
<dbReference type="eggNOG" id="COG2983">
    <property type="taxonomic scope" value="Bacteria"/>
</dbReference>
<dbReference type="HOGENOM" id="CLU_109769_0_1_6"/>
<dbReference type="Proteomes" id="UP000002168">
    <property type="component" value="Chromosome"/>
</dbReference>
<dbReference type="HAMAP" id="MF_00676">
    <property type="entry name" value="UPF0260"/>
    <property type="match status" value="1"/>
</dbReference>
<dbReference type="InterPro" id="IPR005358">
    <property type="entry name" value="Puta_zinc/iron-chelating_dom"/>
</dbReference>
<dbReference type="InterPro" id="IPR008228">
    <property type="entry name" value="UCP006173"/>
</dbReference>
<dbReference type="NCBIfam" id="NF003500">
    <property type="entry name" value="PRK05170.1-4"/>
    <property type="match status" value="1"/>
</dbReference>
<dbReference type="NCBIfam" id="NF003501">
    <property type="entry name" value="PRK05170.1-5"/>
    <property type="match status" value="1"/>
</dbReference>
<dbReference type="NCBIfam" id="NF003507">
    <property type="entry name" value="PRK05170.2-5"/>
    <property type="match status" value="1"/>
</dbReference>
<dbReference type="PANTHER" id="PTHR37421">
    <property type="entry name" value="UPF0260 PROTEIN YCGN"/>
    <property type="match status" value="1"/>
</dbReference>
<dbReference type="PANTHER" id="PTHR37421:SF1">
    <property type="entry name" value="UPF0260 PROTEIN YCGN"/>
    <property type="match status" value="1"/>
</dbReference>
<dbReference type="Pfam" id="PF03692">
    <property type="entry name" value="CxxCxxCC"/>
    <property type="match status" value="1"/>
</dbReference>
<dbReference type="PIRSF" id="PIRSF006173">
    <property type="entry name" value="UCP006173"/>
    <property type="match status" value="1"/>
</dbReference>
<reference key="1">
    <citation type="submission" date="2008-02" db="EMBL/GenBank/DDBJ databases">
        <title>Complete sequence of Shewanella woodyi ATCC 51908.</title>
        <authorList>
            <consortium name="US DOE Joint Genome Institute"/>
            <person name="Copeland A."/>
            <person name="Lucas S."/>
            <person name="Lapidus A."/>
            <person name="Glavina del Rio T."/>
            <person name="Dalin E."/>
            <person name="Tice H."/>
            <person name="Bruce D."/>
            <person name="Goodwin L."/>
            <person name="Pitluck S."/>
            <person name="Sims D."/>
            <person name="Brettin T."/>
            <person name="Detter J.C."/>
            <person name="Han C."/>
            <person name="Kuske C.R."/>
            <person name="Schmutz J."/>
            <person name="Larimer F."/>
            <person name="Land M."/>
            <person name="Hauser L."/>
            <person name="Kyrpides N."/>
            <person name="Lykidis A."/>
            <person name="Zhao J.-S."/>
            <person name="Richardson P."/>
        </authorList>
    </citation>
    <scope>NUCLEOTIDE SEQUENCE [LARGE SCALE GENOMIC DNA]</scope>
    <source>
        <strain>ATCC 51908 / MS32</strain>
    </source>
</reference>
<evidence type="ECO:0000255" key="1">
    <source>
        <dbReference type="HAMAP-Rule" id="MF_00676"/>
    </source>
</evidence>
<comment type="similarity">
    <text evidence="1">Belongs to the UPF0260 family.</text>
</comment>
<protein>
    <recommendedName>
        <fullName evidence="1">UPF0260 protein Swoo_2117</fullName>
    </recommendedName>
</protein>
<gene>
    <name type="ordered locus">Swoo_2117</name>
</gene>
<organism>
    <name type="scientific">Shewanella woodyi (strain ATCC 51908 / MS32)</name>
    <dbReference type="NCBI Taxonomy" id="392500"/>
    <lineage>
        <taxon>Bacteria</taxon>
        <taxon>Pseudomonadati</taxon>
        <taxon>Pseudomonadota</taxon>
        <taxon>Gammaproteobacteria</taxon>
        <taxon>Alteromonadales</taxon>
        <taxon>Shewanellaceae</taxon>
        <taxon>Shewanella</taxon>
    </lineage>
</organism>
<proteinExistence type="inferred from homology"/>
<accession>B1KDK4</accession>
<sequence>MSFWKEKSLAQLDTQEWESLCDGCGKCCLNKLIDDETEELYYTNAACKLLDHQDGHCVHYQERFTFVPSCTQVTVDNVAQLTWLPDSCAYRRLYLGRELPSWHPLITGSKAAMHEAGMSTQNKVKCETKVRYIEDHIVLWPMRDLD</sequence>
<keyword id="KW-1185">Reference proteome</keyword>
<feature type="chain" id="PRO_1000131639" description="UPF0260 protein Swoo_2117">
    <location>
        <begin position="1"/>
        <end position="146"/>
    </location>
</feature>